<comment type="function">
    <text evidence="1">IF-3 binds to the 30S ribosomal subunit and shifts the equilibrium between 70S ribosomes and their 50S and 30S subunits in favor of the free subunits, thus enhancing the availability of 30S subunits on which protein synthesis initiation begins.</text>
</comment>
<comment type="subunit">
    <text evidence="1">Monomer.</text>
</comment>
<comment type="subcellular location">
    <subcellularLocation>
        <location evidence="1">Cytoplasm</location>
    </subcellularLocation>
</comment>
<comment type="similarity">
    <text evidence="1">Belongs to the IF-3 family.</text>
</comment>
<gene>
    <name evidence="1" type="primary">infC</name>
    <name type="ordered locus">Cag_1714</name>
</gene>
<feature type="chain" id="PRO_1000004536" description="Translation initiation factor IF-3">
    <location>
        <begin position="1"/>
        <end position="226"/>
    </location>
</feature>
<feature type="region of interest" description="Disordered" evidence="2">
    <location>
        <begin position="195"/>
        <end position="226"/>
    </location>
</feature>
<feature type="compositionally biased region" description="Acidic residues" evidence="2">
    <location>
        <begin position="205"/>
        <end position="226"/>
    </location>
</feature>
<proteinExistence type="inferred from homology"/>
<evidence type="ECO:0000255" key="1">
    <source>
        <dbReference type="HAMAP-Rule" id="MF_00080"/>
    </source>
</evidence>
<evidence type="ECO:0000256" key="2">
    <source>
        <dbReference type="SAM" id="MobiDB-lite"/>
    </source>
</evidence>
<dbReference type="EMBL" id="CP000108">
    <property type="protein sequence ID" value="ABB28965.1"/>
    <property type="molecule type" value="Genomic_DNA"/>
</dbReference>
<dbReference type="SMR" id="Q3APW0"/>
<dbReference type="STRING" id="340177.Cag_1714"/>
<dbReference type="KEGG" id="cch:Cag_1714"/>
<dbReference type="eggNOG" id="COG0290">
    <property type="taxonomic scope" value="Bacteria"/>
</dbReference>
<dbReference type="HOGENOM" id="CLU_054919_3_0_10"/>
<dbReference type="OrthoDB" id="9806014at2"/>
<dbReference type="GO" id="GO:0005829">
    <property type="term" value="C:cytosol"/>
    <property type="evidence" value="ECO:0007669"/>
    <property type="project" value="TreeGrafter"/>
</dbReference>
<dbReference type="GO" id="GO:0016020">
    <property type="term" value="C:membrane"/>
    <property type="evidence" value="ECO:0007669"/>
    <property type="project" value="TreeGrafter"/>
</dbReference>
<dbReference type="GO" id="GO:0043022">
    <property type="term" value="F:ribosome binding"/>
    <property type="evidence" value="ECO:0007669"/>
    <property type="project" value="TreeGrafter"/>
</dbReference>
<dbReference type="GO" id="GO:0003743">
    <property type="term" value="F:translation initiation factor activity"/>
    <property type="evidence" value="ECO:0007669"/>
    <property type="project" value="UniProtKB-UniRule"/>
</dbReference>
<dbReference type="GO" id="GO:0032790">
    <property type="term" value="P:ribosome disassembly"/>
    <property type="evidence" value="ECO:0007669"/>
    <property type="project" value="TreeGrafter"/>
</dbReference>
<dbReference type="Gene3D" id="3.30.110.10">
    <property type="entry name" value="Translation initiation factor 3 (IF-3), C-terminal domain"/>
    <property type="match status" value="1"/>
</dbReference>
<dbReference type="Gene3D" id="3.10.20.80">
    <property type="entry name" value="Translation initiation factor 3 (IF-3), N-terminal domain"/>
    <property type="match status" value="1"/>
</dbReference>
<dbReference type="HAMAP" id="MF_00080">
    <property type="entry name" value="IF_3"/>
    <property type="match status" value="1"/>
</dbReference>
<dbReference type="InterPro" id="IPR036788">
    <property type="entry name" value="T_IF-3_C_sf"/>
</dbReference>
<dbReference type="InterPro" id="IPR036787">
    <property type="entry name" value="T_IF-3_N_sf"/>
</dbReference>
<dbReference type="InterPro" id="IPR001288">
    <property type="entry name" value="Translation_initiation_fac_3"/>
</dbReference>
<dbReference type="InterPro" id="IPR019815">
    <property type="entry name" value="Translation_initiation_fac_3_C"/>
</dbReference>
<dbReference type="InterPro" id="IPR019814">
    <property type="entry name" value="Translation_initiation_fac_3_N"/>
</dbReference>
<dbReference type="NCBIfam" id="TIGR00168">
    <property type="entry name" value="infC"/>
    <property type="match status" value="1"/>
</dbReference>
<dbReference type="PANTHER" id="PTHR10938">
    <property type="entry name" value="TRANSLATION INITIATION FACTOR IF-3"/>
    <property type="match status" value="1"/>
</dbReference>
<dbReference type="PANTHER" id="PTHR10938:SF0">
    <property type="entry name" value="TRANSLATION INITIATION FACTOR IF-3, MITOCHONDRIAL"/>
    <property type="match status" value="1"/>
</dbReference>
<dbReference type="Pfam" id="PF00707">
    <property type="entry name" value="IF3_C"/>
    <property type="match status" value="1"/>
</dbReference>
<dbReference type="Pfam" id="PF05198">
    <property type="entry name" value="IF3_N"/>
    <property type="match status" value="1"/>
</dbReference>
<dbReference type="SUPFAM" id="SSF55200">
    <property type="entry name" value="Translation initiation factor IF3, C-terminal domain"/>
    <property type="match status" value="1"/>
</dbReference>
<dbReference type="SUPFAM" id="SSF54364">
    <property type="entry name" value="Translation initiation factor IF3, N-terminal domain"/>
    <property type="match status" value="1"/>
</dbReference>
<sequence length="226" mass="26276">MKKPKVTTQKPKLTYRVNEQIRVPEVRVIFTDGTQKVMPTLEARRMAEERNQDLIEVQPNAAPPVCKFDNLGKLLYKMDKRDKDLKKKQKATTLKELRFHPNTDKHDFDFKTAHLEEFLRKGNRVRATIVFLGRSIIYKDKGLELAERLTERLSIVSNRDGDPKFEGKKLFVYFDPDKKKIDTYERIKAKTSQPFVPLAPLSPEDLIEEPELESESDSDAEPESDN</sequence>
<organism>
    <name type="scientific">Chlorobium chlorochromatii (strain CaD3)</name>
    <dbReference type="NCBI Taxonomy" id="340177"/>
    <lineage>
        <taxon>Bacteria</taxon>
        <taxon>Pseudomonadati</taxon>
        <taxon>Chlorobiota</taxon>
        <taxon>Chlorobiia</taxon>
        <taxon>Chlorobiales</taxon>
        <taxon>Chlorobiaceae</taxon>
        <taxon>Chlorobium/Pelodictyon group</taxon>
        <taxon>Chlorobium</taxon>
    </lineage>
</organism>
<reference key="1">
    <citation type="submission" date="2005-08" db="EMBL/GenBank/DDBJ databases">
        <title>Complete sequence of Chlorobium chlorochromatii CaD3.</title>
        <authorList>
            <consortium name="US DOE Joint Genome Institute"/>
            <person name="Copeland A."/>
            <person name="Lucas S."/>
            <person name="Lapidus A."/>
            <person name="Barry K."/>
            <person name="Detter J.C."/>
            <person name="Glavina T."/>
            <person name="Hammon N."/>
            <person name="Israni S."/>
            <person name="Pitluck S."/>
            <person name="Bryant D."/>
            <person name="Schmutz J."/>
            <person name="Larimer F."/>
            <person name="Land M."/>
            <person name="Kyrpides N."/>
            <person name="Ivanova N."/>
            <person name="Richardson P."/>
        </authorList>
    </citation>
    <scope>NUCLEOTIDE SEQUENCE [LARGE SCALE GENOMIC DNA]</scope>
    <source>
        <strain>CaD3</strain>
    </source>
</reference>
<protein>
    <recommendedName>
        <fullName evidence="1">Translation initiation factor IF-3</fullName>
    </recommendedName>
</protein>
<name>IF3_CHLCH</name>
<keyword id="KW-0963">Cytoplasm</keyword>
<keyword id="KW-0396">Initiation factor</keyword>
<keyword id="KW-0648">Protein biosynthesis</keyword>
<accession>Q3APW0</accession>